<proteinExistence type="inferred from homology"/>
<dbReference type="EMBL" id="CP000656">
    <property type="protein sequence ID" value="ABP46184.1"/>
    <property type="status" value="ALT_INIT"/>
    <property type="molecule type" value="Genomic_DNA"/>
</dbReference>
<dbReference type="SMR" id="A4TC18"/>
<dbReference type="STRING" id="350054.Mflv_3712"/>
<dbReference type="KEGG" id="mgi:Mflv_3712"/>
<dbReference type="eggNOG" id="COG1481">
    <property type="taxonomic scope" value="Bacteria"/>
</dbReference>
<dbReference type="HOGENOM" id="CLU_053282_0_0_11"/>
<dbReference type="GO" id="GO:0003677">
    <property type="term" value="F:DNA binding"/>
    <property type="evidence" value="ECO:0007669"/>
    <property type="project" value="UniProtKB-UniRule"/>
</dbReference>
<dbReference type="GO" id="GO:0051301">
    <property type="term" value="P:cell division"/>
    <property type="evidence" value="ECO:0007669"/>
    <property type="project" value="UniProtKB-UniRule"/>
</dbReference>
<dbReference type="GO" id="GO:0043937">
    <property type="term" value="P:regulation of sporulation"/>
    <property type="evidence" value="ECO:0007669"/>
    <property type="project" value="InterPro"/>
</dbReference>
<dbReference type="FunFam" id="3.10.28.10:FF:000001">
    <property type="entry name" value="Probable cell division protein WhiA"/>
    <property type="match status" value="1"/>
</dbReference>
<dbReference type="Gene3D" id="3.10.28.10">
    <property type="entry name" value="Homing endonucleases"/>
    <property type="match status" value="1"/>
</dbReference>
<dbReference type="HAMAP" id="MF_01420">
    <property type="entry name" value="HTH_type_WhiA"/>
    <property type="match status" value="1"/>
</dbReference>
<dbReference type="InterPro" id="IPR027434">
    <property type="entry name" value="Homing_endonucl"/>
</dbReference>
<dbReference type="InterPro" id="IPR018478">
    <property type="entry name" value="Sporu_reg_WhiA_N_dom"/>
</dbReference>
<dbReference type="InterPro" id="IPR003802">
    <property type="entry name" value="Sporulation_regulator_WhiA"/>
</dbReference>
<dbReference type="InterPro" id="IPR023054">
    <property type="entry name" value="Sporulation_regulator_WhiA_C"/>
</dbReference>
<dbReference type="InterPro" id="IPR039518">
    <property type="entry name" value="WhiA_LAGLIDADG_dom"/>
</dbReference>
<dbReference type="NCBIfam" id="TIGR00647">
    <property type="entry name" value="DNA_bind_WhiA"/>
    <property type="match status" value="1"/>
</dbReference>
<dbReference type="PANTHER" id="PTHR37307">
    <property type="entry name" value="CELL DIVISION PROTEIN WHIA-RELATED"/>
    <property type="match status" value="1"/>
</dbReference>
<dbReference type="PANTHER" id="PTHR37307:SF1">
    <property type="entry name" value="CELL DIVISION PROTEIN WHIA-RELATED"/>
    <property type="match status" value="1"/>
</dbReference>
<dbReference type="Pfam" id="PF02650">
    <property type="entry name" value="HTH_WhiA"/>
    <property type="match status" value="1"/>
</dbReference>
<dbReference type="Pfam" id="PF14527">
    <property type="entry name" value="LAGLIDADG_WhiA"/>
    <property type="match status" value="1"/>
</dbReference>
<dbReference type="Pfam" id="PF10298">
    <property type="entry name" value="WhiA_N"/>
    <property type="match status" value="1"/>
</dbReference>
<protein>
    <recommendedName>
        <fullName evidence="2">Probable cell division protein WhiA</fullName>
    </recommendedName>
</protein>
<comment type="function">
    <text evidence="2">Involved in cell division and chromosome segregation.</text>
</comment>
<comment type="similarity">
    <text evidence="2">Belongs to the WhiA family.</text>
</comment>
<comment type="sequence caution" evidence="1">
    <conflict type="erroneous initiation">
        <sequence resource="EMBL-CDS" id="ABP46184"/>
    </conflict>
    <text>Truncated N-terminus.</text>
</comment>
<keyword id="KW-0131">Cell cycle</keyword>
<keyword id="KW-0132">Cell division</keyword>
<keyword id="KW-0238">DNA-binding</keyword>
<sequence length="327" mass="34967">MAMTAEVKDELSRLVVNSVSARRAEVASLLRFAGGLHIVSGRVVVEAEVDLGIIARRLRKDIYDLYGYSAVVHVLSASGIRKSTRYVVRVAKDGEALARQTGLLDLRGRPVRGLPAQVVGGSVADAEAAWRGAFLAHGSLTEPGRSSALEVSCPGPEAALALVGAARRLGVSAKAREVRGSDRVVVRDGEAIGALLTRMGAQDTRLTWEERRMRREVRATANRLANFDDANLRRSARAAVAAAARVERALEILGDTVPDHLAAAGTLRVAHRQASLEELGRLADPPMTKDAVAGRIRRLLSMADRKAKQDGIPDTESAVTPDLLEDA</sequence>
<organism>
    <name type="scientific">Mycolicibacterium gilvum (strain PYR-GCK)</name>
    <name type="common">Mycobacterium gilvum (strain PYR-GCK)</name>
    <dbReference type="NCBI Taxonomy" id="350054"/>
    <lineage>
        <taxon>Bacteria</taxon>
        <taxon>Bacillati</taxon>
        <taxon>Actinomycetota</taxon>
        <taxon>Actinomycetes</taxon>
        <taxon>Mycobacteriales</taxon>
        <taxon>Mycobacteriaceae</taxon>
        <taxon>Mycolicibacterium</taxon>
    </lineage>
</organism>
<gene>
    <name evidence="2" type="primary">whiA</name>
    <name type="ordered locus">Mflv_3712</name>
</gene>
<reference key="1">
    <citation type="submission" date="2007-04" db="EMBL/GenBank/DDBJ databases">
        <title>Complete sequence of chromosome of Mycobacterium gilvum PYR-GCK.</title>
        <authorList>
            <consortium name="US DOE Joint Genome Institute"/>
            <person name="Copeland A."/>
            <person name="Lucas S."/>
            <person name="Lapidus A."/>
            <person name="Barry K."/>
            <person name="Detter J.C."/>
            <person name="Glavina del Rio T."/>
            <person name="Hammon N."/>
            <person name="Israni S."/>
            <person name="Dalin E."/>
            <person name="Tice H."/>
            <person name="Pitluck S."/>
            <person name="Chain P."/>
            <person name="Malfatti S."/>
            <person name="Shin M."/>
            <person name="Vergez L."/>
            <person name="Schmutz J."/>
            <person name="Larimer F."/>
            <person name="Land M."/>
            <person name="Hauser L."/>
            <person name="Kyrpides N."/>
            <person name="Mikhailova N."/>
            <person name="Miller C."/>
            <person name="Richardson P."/>
        </authorList>
    </citation>
    <scope>NUCLEOTIDE SEQUENCE [LARGE SCALE GENOMIC DNA]</scope>
    <source>
        <strain>PYR-GCK</strain>
    </source>
</reference>
<name>WHIA_MYCGI</name>
<evidence type="ECO:0000250" key="1">
    <source>
        <dbReference type="UniProtKB" id="P9WF45"/>
    </source>
</evidence>
<evidence type="ECO:0000255" key="2">
    <source>
        <dbReference type="HAMAP-Rule" id="MF_01420"/>
    </source>
</evidence>
<evidence type="ECO:0000256" key="3">
    <source>
        <dbReference type="SAM" id="MobiDB-lite"/>
    </source>
</evidence>
<accession>A4TC18</accession>
<feature type="chain" id="PRO_0000376525" description="Probable cell division protein WhiA">
    <location>
        <begin position="1"/>
        <end position="327"/>
    </location>
</feature>
<feature type="DNA-binding region" description="H-T-H motif" evidence="2">
    <location>
        <begin position="275"/>
        <end position="308"/>
    </location>
</feature>
<feature type="region of interest" description="Disordered" evidence="3">
    <location>
        <begin position="304"/>
        <end position="327"/>
    </location>
</feature>